<reference evidence="11" key="1">
    <citation type="submission" date="1999-06" db="EMBL/GenBank/DDBJ databases">
        <title>Inflammatory response gene 6 (IRG6/CIG6) is regulated by NF-kB in endothelial cells.</title>
        <authorList>
            <person name="Dorfleutner A."/>
            <person name="Stehlik C."/>
            <person name="Koranda M."/>
            <person name="Kroismayr R."/>
            <person name="Binder B.R."/>
            <person name="Lipp J."/>
        </authorList>
    </citation>
    <scope>NUCLEOTIDE SEQUENCE [MRNA]</scope>
</reference>
<reference key="2">
    <citation type="journal article" date="2020" name="Arch. Virol.">
        <title>The antiviral protein viperin interacts with the viral N protein to inhibit proliferation of porcine epidemic diarrhea virus.</title>
        <authorList>
            <person name="Wu J."/>
            <person name="Chi H."/>
            <person name="Fu Y."/>
            <person name="Cao A."/>
            <person name="Shi J."/>
            <person name="Zhu M."/>
            <person name="Zhang L."/>
            <person name="Hua D."/>
            <person name="Huang J."/>
        </authorList>
    </citation>
    <scope>FUNCTION</scope>
    <scope>INTERACTION WITH PORCINE EPIDEMIC DIARRHEA VIRUS PROTEIN N (MICROBIAL INFECTION)</scope>
    <scope>SUBCELLULAR LOCATION</scope>
</reference>
<reference key="3">
    <citation type="journal article" date="2020" name="J. Med. Virol.">
        <title>Viperin inhibits classical swine fever virus replication by interacting with viral nonstructural 5A protein.</title>
        <authorList>
            <person name="Xu C."/>
            <person name="Feng L."/>
            <person name="Chen P."/>
            <person name="Li A."/>
            <person name="Guo S."/>
            <person name="Jiao X."/>
            <person name="Zhang C."/>
            <person name="Zhao Y."/>
            <person name="Jin X."/>
            <person name="Zhong K."/>
            <person name="Guo Y."/>
            <person name="Zhu H."/>
            <person name="Han L."/>
            <person name="Yang G."/>
            <person name="Li H."/>
            <person name="Wang Y."/>
        </authorList>
    </citation>
    <scope>FUNCTION</scope>
    <scope>INTERACTION WITH CLASSICAL SWINE FEVER VIRUS PROTEIN NS5A (MICROBIAL INFECTION)</scope>
</reference>
<reference key="4">
    <citation type="journal article" date="2022" name="Front. Mol. Biosci.">
        <title>Radical-SAM dependent nucleotide dehydratase (SAND), rectification of the names of an ancient iron-sulfur enzyme using NC-IUBMB recommendations.</title>
        <authorList>
            <person name="Ji Y."/>
            <person name="Wei L."/>
            <person name="Da A."/>
            <person name="Stark H."/>
            <person name="Hagedoorn P.-L."/>
            <person name="Ciofi-Baffoni S."/>
            <person name="Cowley S.A."/>
            <person name="Louro R.O."/>
            <person name="Todorovic S."/>
            <person name="Mroginski M.A."/>
            <person name="Nicolet Y."/>
            <person name="Roessler M.M."/>
            <person name="Le Brun N.E."/>
            <person name="Piccioli M."/>
            <person name="James W.S."/>
            <person name="Hagen W.R."/>
            <person name="Ebrahimi K.H."/>
        </authorList>
    </citation>
    <scope>NOMENCLATURE</scope>
</reference>
<dbReference type="EC" id="4.2.-.-" evidence="3"/>
<dbReference type="EMBL" id="AF156929">
    <property type="protein sequence ID" value="AAF74525.1"/>
    <property type="molecule type" value="mRNA"/>
</dbReference>
<dbReference type="RefSeq" id="NP_998982.1">
    <property type="nucleotide sequence ID" value="NM_213817.1"/>
</dbReference>
<dbReference type="SMR" id="Q9MZU4"/>
<dbReference type="FunCoup" id="Q9MZU4">
    <property type="interactions" value="55"/>
</dbReference>
<dbReference type="STRING" id="9823.ENSSSCP00000052007"/>
<dbReference type="PaxDb" id="9823-ENSSSCP00000009218"/>
<dbReference type="GeneID" id="396752"/>
<dbReference type="KEGG" id="ssc:396752"/>
<dbReference type="CTD" id="91543"/>
<dbReference type="eggNOG" id="ENOG502QQMH">
    <property type="taxonomic scope" value="Eukaryota"/>
</dbReference>
<dbReference type="InParanoid" id="Q9MZU4"/>
<dbReference type="OrthoDB" id="549750at2759"/>
<dbReference type="Proteomes" id="UP000008227">
    <property type="component" value="Unplaced"/>
</dbReference>
<dbReference type="Proteomes" id="UP000314985">
    <property type="component" value="Unplaced"/>
</dbReference>
<dbReference type="Proteomes" id="UP000694570">
    <property type="component" value="Unplaced"/>
</dbReference>
<dbReference type="Proteomes" id="UP000694571">
    <property type="component" value="Unplaced"/>
</dbReference>
<dbReference type="Proteomes" id="UP000694720">
    <property type="component" value="Unplaced"/>
</dbReference>
<dbReference type="Proteomes" id="UP000694722">
    <property type="component" value="Unplaced"/>
</dbReference>
<dbReference type="Proteomes" id="UP000694723">
    <property type="component" value="Unplaced"/>
</dbReference>
<dbReference type="Proteomes" id="UP000694724">
    <property type="component" value="Unplaced"/>
</dbReference>
<dbReference type="Proteomes" id="UP000694725">
    <property type="component" value="Unplaced"/>
</dbReference>
<dbReference type="Proteomes" id="UP000694726">
    <property type="component" value="Unplaced"/>
</dbReference>
<dbReference type="Proteomes" id="UP000694727">
    <property type="component" value="Unplaced"/>
</dbReference>
<dbReference type="Proteomes" id="UP000694728">
    <property type="component" value="Unplaced"/>
</dbReference>
<dbReference type="GO" id="GO:0005783">
    <property type="term" value="C:endoplasmic reticulum"/>
    <property type="evidence" value="ECO:0000250"/>
    <property type="project" value="UniProtKB"/>
</dbReference>
<dbReference type="GO" id="GO:0005789">
    <property type="term" value="C:endoplasmic reticulum membrane"/>
    <property type="evidence" value="ECO:0000250"/>
    <property type="project" value="UniProtKB"/>
</dbReference>
<dbReference type="GO" id="GO:0005794">
    <property type="term" value="C:Golgi apparatus"/>
    <property type="evidence" value="ECO:0007669"/>
    <property type="project" value="UniProtKB-SubCell"/>
</dbReference>
<dbReference type="GO" id="GO:0005811">
    <property type="term" value="C:lipid droplet"/>
    <property type="evidence" value="ECO:0000250"/>
    <property type="project" value="UniProtKB"/>
</dbReference>
<dbReference type="GO" id="GO:0005743">
    <property type="term" value="C:mitochondrial inner membrane"/>
    <property type="evidence" value="ECO:0007669"/>
    <property type="project" value="UniProtKB-SubCell"/>
</dbReference>
<dbReference type="GO" id="GO:0005741">
    <property type="term" value="C:mitochondrial outer membrane"/>
    <property type="evidence" value="ECO:0007669"/>
    <property type="project" value="UniProtKB-SubCell"/>
</dbReference>
<dbReference type="GO" id="GO:0005739">
    <property type="term" value="C:mitochondrion"/>
    <property type="evidence" value="ECO:0000318"/>
    <property type="project" value="GO_Central"/>
</dbReference>
<dbReference type="GO" id="GO:0051539">
    <property type="term" value="F:4 iron, 4 sulfur cluster binding"/>
    <property type="evidence" value="ECO:0000250"/>
    <property type="project" value="UniProtKB"/>
</dbReference>
<dbReference type="GO" id="GO:0016829">
    <property type="term" value="F:lyase activity"/>
    <property type="evidence" value="ECO:0007669"/>
    <property type="project" value="UniProtKB-KW"/>
</dbReference>
<dbReference type="GO" id="GO:0046872">
    <property type="term" value="F:metal ion binding"/>
    <property type="evidence" value="ECO:0007669"/>
    <property type="project" value="UniProtKB-KW"/>
</dbReference>
<dbReference type="GO" id="GO:0035710">
    <property type="term" value="P:CD4-positive, alpha-beta T cell activation"/>
    <property type="evidence" value="ECO:0000250"/>
    <property type="project" value="UniProtKB"/>
</dbReference>
<dbReference type="GO" id="GO:0043367">
    <property type="term" value="P:CD4-positive, alpha-beta T cell differentiation"/>
    <property type="evidence" value="ECO:0000250"/>
    <property type="project" value="UniProtKB"/>
</dbReference>
<dbReference type="GO" id="GO:0051607">
    <property type="term" value="P:defense response to virus"/>
    <property type="evidence" value="ECO:0000250"/>
    <property type="project" value="UniProtKB"/>
</dbReference>
<dbReference type="GO" id="GO:0045087">
    <property type="term" value="P:innate immune response"/>
    <property type="evidence" value="ECO:0007669"/>
    <property type="project" value="UniProtKB-KW"/>
</dbReference>
<dbReference type="GO" id="GO:0050709">
    <property type="term" value="P:negative regulation of protein secretion"/>
    <property type="evidence" value="ECO:0000250"/>
    <property type="project" value="UniProtKB"/>
</dbReference>
<dbReference type="GO" id="GO:0050778">
    <property type="term" value="P:positive regulation of immune response"/>
    <property type="evidence" value="ECO:0000318"/>
    <property type="project" value="GO_Central"/>
</dbReference>
<dbReference type="GO" id="GO:2000553">
    <property type="term" value="P:positive regulation of T-helper 2 cell cytokine production"/>
    <property type="evidence" value="ECO:0000250"/>
    <property type="project" value="UniProtKB"/>
</dbReference>
<dbReference type="GO" id="GO:0034157">
    <property type="term" value="P:positive regulation of toll-like receptor 7 signaling pathway"/>
    <property type="evidence" value="ECO:0000250"/>
    <property type="project" value="UniProtKB"/>
</dbReference>
<dbReference type="GO" id="GO:0034165">
    <property type="term" value="P:positive regulation of toll-like receptor 9 signaling pathway"/>
    <property type="evidence" value="ECO:0000250"/>
    <property type="project" value="UniProtKB"/>
</dbReference>
<dbReference type="GO" id="GO:0009615">
    <property type="term" value="P:response to virus"/>
    <property type="evidence" value="ECO:0000250"/>
    <property type="project" value="UniProtKB"/>
</dbReference>
<dbReference type="CDD" id="cd01335">
    <property type="entry name" value="Radical_SAM"/>
    <property type="match status" value="1"/>
</dbReference>
<dbReference type="FunFam" id="3.20.20.70:FF:000152">
    <property type="entry name" value="radical S-adenosyl methionine domain-containing protein 2"/>
    <property type="match status" value="1"/>
</dbReference>
<dbReference type="Gene3D" id="3.20.20.70">
    <property type="entry name" value="Aldolase class I"/>
    <property type="match status" value="1"/>
</dbReference>
<dbReference type="InterPro" id="IPR013785">
    <property type="entry name" value="Aldolase_TIM"/>
</dbReference>
<dbReference type="InterPro" id="IPR006638">
    <property type="entry name" value="Elp3/MiaA/NifB-like_rSAM"/>
</dbReference>
<dbReference type="InterPro" id="IPR026372">
    <property type="entry name" value="RSAD2"/>
</dbReference>
<dbReference type="InterPro" id="IPR051196">
    <property type="entry name" value="RSAD2/Viperin_antiviral"/>
</dbReference>
<dbReference type="InterPro" id="IPR007197">
    <property type="entry name" value="rSAM"/>
</dbReference>
<dbReference type="NCBIfam" id="TIGR04278">
    <property type="entry name" value="viperin"/>
    <property type="match status" value="1"/>
</dbReference>
<dbReference type="NCBIfam" id="NF038283">
    <property type="entry name" value="viperin_w_prok"/>
    <property type="match status" value="1"/>
</dbReference>
<dbReference type="PANTHER" id="PTHR21339">
    <property type="entry name" value="RADICAL S-ADENOSYL METHIONINE DOMAIN-CONTAINING PROTEIN 2"/>
    <property type="match status" value="1"/>
</dbReference>
<dbReference type="PANTHER" id="PTHR21339:SF0">
    <property type="entry name" value="S-ADENOSYLMETHIONINE-DEPENDENT NUCLEOTIDE DEHYDRATASE RSAD2"/>
    <property type="match status" value="1"/>
</dbReference>
<dbReference type="Pfam" id="PF13353">
    <property type="entry name" value="Fer4_12"/>
    <property type="match status" value="1"/>
</dbReference>
<dbReference type="Pfam" id="PF04055">
    <property type="entry name" value="Radical_SAM"/>
    <property type="match status" value="1"/>
</dbReference>
<dbReference type="SFLD" id="SFLDS00029">
    <property type="entry name" value="Radical_SAM"/>
    <property type="match status" value="1"/>
</dbReference>
<dbReference type="SFLD" id="SFLDG01067">
    <property type="entry name" value="SPASM/twitch_domain_containing"/>
    <property type="match status" value="1"/>
</dbReference>
<dbReference type="SFLD" id="SFLDF00318">
    <property type="entry name" value="Viperin"/>
    <property type="match status" value="1"/>
</dbReference>
<dbReference type="SMART" id="SM00729">
    <property type="entry name" value="Elp3"/>
    <property type="match status" value="1"/>
</dbReference>
<dbReference type="SUPFAM" id="SSF102114">
    <property type="entry name" value="Radical SAM enzymes"/>
    <property type="match status" value="1"/>
</dbReference>
<dbReference type="PROSITE" id="PS51918">
    <property type="entry name" value="RADICAL_SAM"/>
    <property type="match status" value="1"/>
</dbReference>
<comment type="function">
    <text evidence="3 6 7">Interferon-inducible antiviral protein which plays a major role in the cell antiviral state induced by type I and type II interferon. Catalyzes the conversion of cytidine triphosphate (CTP) to 3'-deoxy-3',4'-didehydro-CTP (ddhCTP) via a SAM-dependent radical mechanism. In turn, ddhCTP acts as a chain terminator for the RNA-dependent RNA polymerases from multiple viruses and directly inhibits viral replication. Therefore, inhibits a wide range of DNA and RNA viruses (PubMed:31517388, PubMed:32719955). Also promotes TLR7 and TLR9-dependent production of IFN-beta production in plasmacytoid dendritic cells (pDCs) by facilitating 'Lys-63'-linked ubiquitination of IRAK1 by TRAF6. Plays a role in CD4+ T-cells activation and differentiation. Facilitates T-cell receptor (TCR)-mediated GATA3 activation and optimal T-helper 2 (Th2) cytokine production by modulating NFKB1 and JUNB activities. Can inhibit secretion of soluble proteins (By similarity).</text>
</comment>
<comment type="catalytic activity">
    <reaction evidence="3">
        <text>CTP + AH2 + S-adenosyl-L-methionine = 3'-deoxy-3',4'-didehydro-CTP + 5'-deoxyadenosine + L-methionine + A + H2O + H(+)</text>
        <dbReference type="Rhea" id="RHEA:65944"/>
        <dbReference type="ChEBI" id="CHEBI:13193"/>
        <dbReference type="ChEBI" id="CHEBI:15377"/>
        <dbReference type="ChEBI" id="CHEBI:15378"/>
        <dbReference type="ChEBI" id="CHEBI:17319"/>
        <dbReference type="ChEBI" id="CHEBI:17499"/>
        <dbReference type="ChEBI" id="CHEBI:37563"/>
        <dbReference type="ChEBI" id="CHEBI:57844"/>
        <dbReference type="ChEBI" id="CHEBI:59789"/>
        <dbReference type="ChEBI" id="CHEBI:166821"/>
    </reaction>
</comment>
<comment type="cofactor">
    <cofactor evidence="3">
        <name>[4Fe-4S] cluster</name>
        <dbReference type="ChEBI" id="CHEBI:49883"/>
    </cofactor>
    <text evidence="3">Binds 1 [4Fe-4S] cluster. The cluster is coordinated with 3 cysteines and an exchangeable S-adenosyl-L-methionine.</text>
</comment>
<comment type="activity regulation">
    <text evidence="3">IRAK1 and TRAF6 synergistically activate RSAD2 increasing its activity with CTP as substrate about 10-fold.</text>
</comment>
<comment type="subunit">
    <text evidence="1 3">Homodimer. Interacts with IRAK1 and TRAF6. Interacts with FPPS. Interacts with HADHB. Interacts (via C-terminus) with VAPA/VAP33 (via C-terminus).</text>
</comment>
<comment type="subcellular location">
    <subcellularLocation>
        <location evidence="3">Endoplasmic reticulum membrane</location>
        <topology evidence="3">Peripheral membrane protein</topology>
        <orientation evidence="3">Cytoplasmic side</orientation>
    </subcellularLocation>
    <subcellularLocation>
        <location evidence="3">Golgi apparatus</location>
    </subcellularLocation>
    <subcellularLocation>
        <location evidence="3">Endoplasmic reticulum</location>
    </subcellularLocation>
    <subcellularLocation>
        <location evidence="3">Lipid droplet</location>
    </subcellularLocation>
    <subcellularLocation>
        <location evidence="3">Mitochondrion</location>
    </subcellularLocation>
    <subcellularLocation>
        <location evidence="3">Mitochondrion inner membrane</location>
    </subcellularLocation>
    <subcellularLocation>
        <location evidence="3">Mitochondrion outer membrane</location>
    </subcellularLocation>
</comment>
<comment type="induction">
    <text>By interferon type I, type II and LPS.</text>
</comment>
<comment type="domain">
    <text evidence="1">The N-terminal region (1-42) is necessary for its localization to the endoplasmic reticulum membrane and lipid droplet.</text>
</comment>
<comment type="PTM">
    <text evidence="3">Acetylated by HAT1. HAT1-mediated acetylation of Lys-198 in turn recruits UBE4A that stimulates RSAD2 polyubiquitination leading to proteasomal degradation.</text>
</comment>
<comment type="PTM">
    <text evidence="3">'Lys-6'-linked polyubiquitination at Lys-207 leads to RSAD2 protein degradation.</text>
</comment>
<comment type="similarity">
    <text evidence="10">Belongs to the radical SAM superfamily. RSAD2 family.</text>
</comment>
<evidence type="ECO:0000250" key="1"/>
<evidence type="ECO:0000250" key="2">
    <source>
        <dbReference type="UniProtKB" id="Q8CBB9"/>
    </source>
</evidence>
<evidence type="ECO:0000250" key="3">
    <source>
        <dbReference type="UniProtKB" id="Q8WXG1"/>
    </source>
</evidence>
<evidence type="ECO:0000255" key="4">
    <source>
        <dbReference type="PROSITE-ProRule" id="PRU01266"/>
    </source>
</evidence>
<evidence type="ECO:0000256" key="5">
    <source>
        <dbReference type="SAM" id="MobiDB-lite"/>
    </source>
</evidence>
<evidence type="ECO:0000269" key="6">
    <source>
    </source>
</evidence>
<evidence type="ECO:0000269" key="7">
    <source>
    </source>
</evidence>
<evidence type="ECO:0000303" key="8">
    <source>
    </source>
</evidence>
<evidence type="ECO:0000303" key="9">
    <source ref="1"/>
</evidence>
<evidence type="ECO:0000305" key="10"/>
<evidence type="ECO:0000312" key="11">
    <source>
        <dbReference type="EMBL" id="AAF74525.1"/>
    </source>
</evidence>
<organism>
    <name type="scientific">Sus scrofa</name>
    <name type="common">Pig</name>
    <dbReference type="NCBI Taxonomy" id="9823"/>
    <lineage>
        <taxon>Eukaryota</taxon>
        <taxon>Metazoa</taxon>
        <taxon>Chordata</taxon>
        <taxon>Craniata</taxon>
        <taxon>Vertebrata</taxon>
        <taxon>Euteleostomi</taxon>
        <taxon>Mammalia</taxon>
        <taxon>Eutheria</taxon>
        <taxon>Laurasiatheria</taxon>
        <taxon>Artiodactyla</taxon>
        <taxon>Suina</taxon>
        <taxon>Suidae</taxon>
        <taxon>Sus</taxon>
    </lineage>
</organism>
<keyword id="KW-0004">4Fe-4S</keyword>
<keyword id="KW-0007">Acetylation</keyword>
<keyword id="KW-0051">Antiviral defense</keyword>
<keyword id="KW-0256">Endoplasmic reticulum</keyword>
<keyword id="KW-0333">Golgi apparatus</keyword>
<keyword id="KW-0391">Immunity</keyword>
<keyword id="KW-0399">Innate immunity</keyword>
<keyword id="KW-0408">Iron</keyword>
<keyword id="KW-0411">Iron-sulfur</keyword>
<keyword id="KW-1017">Isopeptide bond</keyword>
<keyword id="KW-0551">Lipid droplet</keyword>
<keyword id="KW-0456">Lyase</keyword>
<keyword id="KW-0472">Membrane</keyword>
<keyword id="KW-0479">Metal-binding</keyword>
<keyword id="KW-0496">Mitochondrion</keyword>
<keyword id="KW-0999">Mitochondrion inner membrane</keyword>
<keyword id="KW-1000">Mitochondrion outer membrane</keyword>
<keyword id="KW-1185">Reference proteome</keyword>
<keyword id="KW-0949">S-adenosyl-L-methionine</keyword>
<keyword id="KW-0832">Ubl conjugation</keyword>
<feature type="chain" id="PRO_0000309587" description="S-adenosylmethionine-dependent nucleotide dehydratase RSAD2">
    <location>
        <begin position="1"/>
        <end position="362"/>
    </location>
</feature>
<feature type="domain" description="Radical SAM core" evidence="4">
    <location>
        <begin position="70"/>
        <end position="290"/>
    </location>
</feature>
<feature type="region of interest" description="Disordered" evidence="5">
    <location>
        <begin position="49"/>
        <end position="71"/>
    </location>
</feature>
<feature type="compositionally biased region" description="Basic and acidic residues" evidence="5">
    <location>
        <begin position="56"/>
        <end position="68"/>
    </location>
</feature>
<feature type="binding site" evidence="2">
    <location>
        <position position="84"/>
    </location>
    <ligand>
        <name>[4Fe-4S] cluster</name>
        <dbReference type="ChEBI" id="CHEBI:49883"/>
        <note>4Fe-4S-S-AdoMet</note>
    </ligand>
</feature>
<feature type="binding site" evidence="2">
    <location>
        <position position="88"/>
    </location>
    <ligand>
        <name>[4Fe-4S] cluster</name>
        <dbReference type="ChEBI" id="CHEBI:49883"/>
        <note>4Fe-4S-S-AdoMet</note>
    </ligand>
</feature>
<feature type="binding site" evidence="2">
    <location>
        <position position="91"/>
    </location>
    <ligand>
        <name>[4Fe-4S] cluster</name>
        <dbReference type="ChEBI" id="CHEBI:49883"/>
        <note>4Fe-4S-S-AdoMet</note>
    </ligand>
</feature>
<feature type="modified residue" description="N6-acetyllysine" evidence="3">
    <location>
        <position position="198"/>
    </location>
</feature>
<feature type="cross-link" description="Glycyl lysine isopeptide (Lys-Gly) (interchain with G-Cter in ubiquitin)" evidence="3">
    <location>
        <position position="207"/>
    </location>
</feature>
<protein>
    <recommendedName>
        <fullName evidence="8">S-adenosylmethionine-dependent nucleotide dehydratase RSAD2</fullName>
        <shortName evidence="8">SAND</shortName>
        <ecNumber evidence="3">4.2.-.-</ecNumber>
    </recommendedName>
    <alternativeName>
        <fullName evidence="9">Inflammatory response gene 6 protein</fullName>
    </alternativeName>
    <alternativeName>
        <fullName>Radical S-adenosyl methionine domain-containing protein 2</fullName>
    </alternativeName>
    <alternativeName>
        <fullName>Virus inhibitory protein, endoplasmic reticulum-associated, interferon-inducible</fullName>
        <shortName>Viperin</shortName>
    </alternativeName>
</protein>
<sequence>MWTLVPVTFALRLLSTFVQPLGSLGSSLGPLFLWLWAAFWRAGGDRSRQQLQGKTEAGEPPRAQEDSHLPTTPTSVNYHFTRQCNYKCGFCFHTAKTSFVLPLEEAKRGLWLLKEAGMEKINFSGGEPFIHDRGEYLGKLVRFCKEELQLPSVSIVSNGSLIWERWFKSYGEYLDILAISCDSFDEQVNVLIGRGQGKKNHVENLQKLRTWCRDYKVAFKINSVINRFNVEEDMTEHIKALNPVRWKVFQCLLIEGENVGEDALREAEQFVISDEEFEEFLDRHKDVSCLVPESNRQMRDSYLILDEYMRFLNCRNGRKDPSKSILDVGVEKAIKFSGFDEKMFLKRGGKYVWSKADLKLDW</sequence>
<proteinExistence type="evidence at protein level"/>
<accession>Q9MZU4</accession>
<name>RSAD2_PIG</name>
<gene>
    <name evidence="3" type="primary">RSAD2</name>
    <name evidence="9" type="synonym">CIG6</name>
    <name evidence="9" type="synonym">IRG6</name>
</gene>